<proteinExistence type="inferred from homology"/>
<comment type="function">
    <text evidence="1">Catalyzes the anti-1,4-elimination of the C-3 phosphate and the C-6 proR hydrogen from 5-enolpyruvylshikimate-3-phosphate (EPSP) to yield chorismate, which is the branch point compound that serves as the starting substrate for the three terminal pathways of aromatic amino acid biosynthesis. This reaction introduces a second double bond into the aromatic ring system.</text>
</comment>
<comment type="catalytic activity">
    <reaction evidence="1">
        <text>5-O-(1-carboxyvinyl)-3-phosphoshikimate = chorismate + phosphate</text>
        <dbReference type="Rhea" id="RHEA:21020"/>
        <dbReference type="ChEBI" id="CHEBI:29748"/>
        <dbReference type="ChEBI" id="CHEBI:43474"/>
        <dbReference type="ChEBI" id="CHEBI:57701"/>
        <dbReference type="EC" id="4.2.3.5"/>
    </reaction>
</comment>
<comment type="cofactor">
    <cofactor evidence="1">
        <name>FMNH2</name>
        <dbReference type="ChEBI" id="CHEBI:57618"/>
    </cofactor>
    <text evidence="1">Reduced FMN (FMNH(2)).</text>
</comment>
<comment type="pathway">
    <text evidence="1">Metabolic intermediate biosynthesis; chorismate biosynthesis; chorismate from D-erythrose 4-phosphate and phosphoenolpyruvate: step 7/7.</text>
</comment>
<comment type="subunit">
    <text evidence="1">Homotetramer.</text>
</comment>
<comment type="similarity">
    <text evidence="1">Belongs to the chorismate synthase family.</text>
</comment>
<reference key="1">
    <citation type="journal article" date="2001" name="J. Bacteriol.">
        <title>Genome of the bacterium Streptococcus pneumoniae strain R6.</title>
        <authorList>
            <person name="Hoskins J."/>
            <person name="Alborn W.E. Jr."/>
            <person name="Arnold J."/>
            <person name="Blaszczak L.C."/>
            <person name="Burgett S."/>
            <person name="DeHoff B.S."/>
            <person name="Estrem S.T."/>
            <person name="Fritz L."/>
            <person name="Fu D.-J."/>
            <person name="Fuller W."/>
            <person name="Geringer C."/>
            <person name="Gilmour R."/>
            <person name="Glass J.S."/>
            <person name="Khoja H."/>
            <person name="Kraft A.R."/>
            <person name="Lagace R.E."/>
            <person name="LeBlanc D.J."/>
            <person name="Lee L.N."/>
            <person name="Lefkowitz E.J."/>
            <person name="Lu J."/>
            <person name="Matsushima P."/>
            <person name="McAhren S.M."/>
            <person name="McHenney M."/>
            <person name="McLeaster K."/>
            <person name="Mundy C.W."/>
            <person name="Nicas T.I."/>
            <person name="Norris F.H."/>
            <person name="O'Gara M."/>
            <person name="Peery R.B."/>
            <person name="Robertson G.T."/>
            <person name="Rockey P."/>
            <person name="Sun P.-M."/>
            <person name="Winkler M.E."/>
            <person name="Yang Y."/>
            <person name="Young-Bellido M."/>
            <person name="Zhao G."/>
            <person name="Zook C.A."/>
            <person name="Baltz R.H."/>
            <person name="Jaskunas S.R."/>
            <person name="Rosteck P.R. Jr."/>
            <person name="Skatrud P.L."/>
            <person name="Glass J.I."/>
        </authorList>
    </citation>
    <scope>NUCLEOTIDE SEQUENCE [LARGE SCALE GENOMIC DNA]</scope>
    <source>
        <strain>ATCC BAA-255 / R6</strain>
    </source>
</reference>
<accession>P0A2Y7</accession>
<accession>Q97Q57</accession>
<protein>
    <recommendedName>
        <fullName evidence="1">Chorismate synthase</fullName>
        <shortName evidence="1">CS</shortName>
        <ecNumber evidence="1">4.2.3.5</ecNumber>
    </recommendedName>
    <alternativeName>
        <fullName evidence="1">5-enolpyruvylshikimate-3-phosphate phospholyase</fullName>
    </alternativeName>
</protein>
<organism>
    <name type="scientific">Streptococcus pneumoniae (strain ATCC BAA-255 / R6)</name>
    <dbReference type="NCBI Taxonomy" id="171101"/>
    <lineage>
        <taxon>Bacteria</taxon>
        <taxon>Bacillati</taxon>
        <taxon>Bacillota</taxon>
        <taxon>Bacilli</taxon>
        <taxon>Lactobacillales</taxon>
        <taxon>Streptococcaceae</taxon>
        <taxon>Streptococcus</taxon>
    </lineage>
</organism>
<dbReference type="EC" id="4.2.3.5" evidence="1"/>
<dbReference type="EMBL" id="AE007317">
    <property type="protein sequence ID" value="AAL00036.1"/>
    <property type="molecule type" value="Genomic_DNA"/>
</dbReference>
<dbReference type="PIR" id="G98025">
    <property type="entry name" value="G98025"/>
</dbReference>
<dbReference type="RefSeq" id="NP_358825.1">
    <property type="nucleotide sequence ID" value="NC_003098.1"/>
</dbReference>
<dbReference type="RefSeq" id="WP_001269860.1">
    <property type="nucleotide sequence ID" value="NC_003098.1"/>
</dbReference>
<dbReference type="SMR" id="P0A2Y7"/>
<dbReference type="STRING" id="171101.spr1232"/>
<dbReference type="DrugBank" id="DB03350">
    <property type="generic name" value="Cobalt hexammine ion"/>
</dbReference>
<dbReference type="DrugBank" id="DB03247">
    <property type="generic name" value="Flavin mononucleotide"/>
</dbReference>
<dbReference type="KEGG" id="spr:spr1232"/>
<dbReference type="PATRIC" id="fig|171101.6.peg.1338"/>
<dbReference type="eggNOG" id="COG0082">
    <property type="taxonomic scope" value="Bacteria"/>
</dbReference>
<dbReference type="HOGENOM" id="CLU_034547_2_0_9"/>
<dbReference type="UniPathway" id="UPA00053">
    <property type="reaction ID" value="UER00090"/>
</dbReference>
<dbReference type="Proteomes" id="UP000000586">
    <property type="component" value="Chromosome"/>
</dbReference>
<dbReference type="GO" id="GO:0005829">
    <property type="term" value="C:cytosol"/>
    <property type="evidence" value="ECO:0000318"/>
    <property type="project" value="GO_Central"/>
</dbReference>
<dbReference type="GO" id="GO:0004107">
    <property type="term" value="F:chorismate synthase activity"/>
    <property type="evidence" value="ECO:0000318"/>
    <property type="project" value="GO_Central"/>
</dbReference>
<dbReference type="GO" id="GO:0010181">
    <property type="term" value="F:FMN binding"/>
    <property type="evidence" value="ECO:0000318"/>
    <property type="project" value="GO_Central"/>
</dbReference>
<dbReference type="GO" id="GO:0008652">
    <property type="term" value="P:amino acid biosynthetic process"/>
    <property type="evidence" value="ECO:0007669"/>
    <property type="project" value="UniProtKB-KW"/>
</dbReference>
<dbReference type="GO" id="GO:0009073">
    <property type="term" value="P:aromatic amino acid family biosynthetic process"/>
    <property type="evidence" value="ECO:0000318"/>
    <property type="project" value="GO_Central"/>
</dbReference>
<dbReference type="GO" id="GO:0009423">
    <property type="term" value="P:chorismate biosynthetic process"/>
    <property type="evidence" value="ECO:0000318"/>
    <property type="project" value="GO_Central"/>
</dbReference>
<dbReference type="CDD" id="cd07304">
    <property type="entry name" value="Chorismate_synthase"/>
    <property type="match status" value="1"/>
</dbReference>
<dbReference type="FunFam" id="3.60.150.10:FF:000002">
    <property type="entry name" value="Chorismate synthase"/>
    <property type="match status" value="1"/>
</dbReference>
<dbReference type="Gene3D" id="3.60.150.10">
    <property type="entry name" value="Chorismate synthase AroC"/>
    <property type="match status" value="1"/>
</dbReference>
<dbReference type="HAMAP" id="MF_00300">
    <property type="entry name" value="Chorismate_synth"/>
    <property type="match status" value="1"/>
</dbReference>
<dbReference type="InterPro" id="IPR000453">
    <property type="entry name" value="Chorismate_synth"/>
</dbReference>
<dbReference type="InterPro" id="IPR035904">
    <property type="entry name" value="Chorismate_synth_AroC_sf"/>
</dbReference>
<dbReference type="InterPro" id="IPR020541">
    <property type="entry name" value="Chorismate_synthase_CS"/>
</dbReference>
<dbReference type="NCBIfam" id="TIGR00033">
    <property type="entry name" value="aroC"/>
    <property type="match status" value="1"/>
</dbReference>
<dbReference type="NCBIfam" id="NF003793">
    <property type="entry name" value="PRK05382.1"/>
    <property type="match status" value="1"/>
</dbReference>
<dbReference type="PANTHER" id="PTHR21085">
    <property type="entry name" value="CHORISMATE SYNTHASE"/>
    <property type="match status" value="1"/>
</dbReference>
<dbReference type="PANTHER" id="PTHR21085:SF0">
    <property type="entry name" value="CHORISMATE SYNTHASE"/>
    <property type="match status" value="1"/>
</dbReference>
<dbReference type="Pfam" id="PF01264">
    <property type="entry name" value="Chorismate_synt"/>
    <property type="match status" value="1"/>
</dbReference>
<dbReference type="PIRSF" id="PIRSF001456">
    <property type="entry name" value="Chorismate_synth"/>
    <property type="match status" value="1"/>
</dbReference>
<dbReference type="SUPFAM" id="SSF103263">
    <property type="entry name" value="Chorismate synthase, AroC"/>
    <property type="match status" value="1"/>
</dbReference>
<dbReference type="PROSITE" id="PS00787">
    <property type="entry name" value="CHORISMATE_SYNTHASE_1"/>
    <property type="match status" value="1"/>
</dbReference>
<dbReference type="PROSITE" id="PS00788">
    <property type="entry name" value="CHORISMATE_SYNTHASE_2"/>
    <property type="match status" value="1"/>
</dbReference>
<dbReference type="PROSITE" id="PS00789">
    <property type="entry name" value="CHORISMATE_SYNTHASE_3"/>
    <property type="match status" value="1"/>
</dbReference>
<feature type="chain" id="PRO_0000140656" description="Chorismate synthase">
    <location>
        <begin position="1"/>
        <end position="388"/>
    </location>
</feature>
<feature type="binding site" evidence="1">
    <location>
        <position position="39"/>
    </location>
    <ligand>
        <name>NADP(+)</name>
        <dbReference type="ChEBI" id="CHEBI:58349"/>
    </ligand>
</feature>
<feature type="binding site" evidence="1">
    <location>
        <position position="45"/>
    </location>
    <ligand>
        <name>NADP(+)</name>
        <dbReference type="ChEBI" id="CHEBI:58349"/>
    </ligand>
</feature>
<feature type="binding site" evidence="1">
    <location>
        <begin position="130"/>
        <end position="132"/>
    </location>
    <ligand>
        <name>FMN</name>
        <dbReference type="ChEBI" id="CHEBI:58210"/>
    </ligand>
</feature>
<feature type="binding site" evidence="1">
    <location>
        <begin position="251"/>
        <end position="252"/>
    </location>
    <ligand>
        <name>FMN</name>
        <dbReference type="ChEBI" id="CHEBI:58210"/>
    </ligand>
</feature>
<feature type="binding site" evidence="1">
    <location>
        <position position="296"/>
    </location>
    <ligand>
        <name>FMN</name>
        <dbReference type="ChEBI" id="CHEBI:58210"/>
    </ligand>
</feature>
<feature type="binding site" evidence="1">
    <location>
        <begin position="311"/>
        <end position="315"/>
    </location>
    <ligand>
        <name>FMN</name>
        <dbReference type="ChEBI" id="CHEBI:58210"/>
    </ligand>
</feature>
<feature type="binding site" evidence="1">
    <location>
        <position position="337"/>
    </location>
    <ligand>
        <name>FMN</name>
        <dbReference type="ChEBI" id="CHEBI:58210"/>
    </ligand>
</feature>
<evidence type="ECO:0000255" key="1">
    <source>
        <dbReference type="HAMAP-Rule" id="MF_00300"/>
    </source>
</evidence>
<sequence length="388" mass="42872">MRYLTAGESHGPRLTAIIEGIPAGLPLTAEDINEDLRRRQGGYGRGGRMKIENDQVVFTSGVRHGKTTGAPITMDVINKDHQKWLDIMSAEDIEDRLKSKRKITHPRPGHADLVGGIKYRFDDLRNSLERSSARETTMRVAVGAVAKRLLAELDMEIANHVVVFGGKEIDVPENLTVAEIKQRAAQSEVSIVNQEREQEIKDYIDQIKRDGDTIGGVVETVVGGVPVGLGSYVQWDRKLDARLAQAVVSINAFKGVEFGLGFEAGYRKGSQVMDEILWSKEDGYTRRTNNLGGFEGGMTNGQPIVVRGVMKPIPTLYKPLMSVDIETHEPYKATVERSDPTALPAAGMVMEAVVATVLAQEILEKFSSDNLEELKEAVAKHRDYTKNY</sequence>
<gene>
    <name evidence="1" type="primary">aroC</name>
    <name type="ordered locus">spr1232</name>
</gene>
<name>AROC_STRR6</name>
<keyword id="KW-0028">Amino-acid biosynthesis</keyword>
<keyword id="KW-0057">Aromatic amino acid biosynthesis</keyword>
<keyword id="KW-0274">FAD</keyword>
<keyword id="KW-0285">Flavoprotein</keyword>
<keyword id="KW-0288">FMN</keyword>
<keyword id="KW-0456">Lyase</keyword>
<keyword id="KW-0521">NADP</keyword>
<keyword id="KW-1185">Reference proteome</keyword>